<evidence type="ECO:0000255" key="1">
    <source>
        <dbReference type="HAMAP-Rule" id="MF_01642"/>
    </source>
</evidence>
<protein>
    <recommendedName>
        <fullName evidence="1">LL-diaminopimelate aminotransferase</fullName>
        <shortName evidence="1">DAP-AT</shortName>
        <shortName evidence="1">DAP-aminotransferase</shortName>
        <shortName evidence="1">LL-DAP-aminotransferase</shortName>
        <ecNumber evidence="1">2.6.1.83</ecNumber>
    </recommendedName>
</protein>
<organism>
    <name type="scientific">Synechococcus sp. (strain RCC307)</name>
    <dbReference type="NCBI Taxonomy" id="316278"/>
    <lineage>
        <taxon>Bacteria</taxon>
        <taxon>Bacillati</taxon>
        <taxon>Cyanobacteriota</taxon>
        <taxon>Cyanophyceae</taxon>
        <taxon>Synechococcales</taxon>
        <taxon>Synechococcaceae</taxon>
        <taxon>Synechococcus</taxon>
    </lineage>
</organism>
<reference key="1">
    <citation type="submission" date="2006-05" db="EMBL/GenBank/DDBJ databases">
        <authorList>
            <consortium name="Genoscope"/>
        </authorList>
    </citation>
    <scope>NUCLEOTIDE SEQUENCE [LARGE SCALE GENOMIC DNA]</scope>
    <source>
        <strain>RCC307</strain>
    </source>
</reference>
<comment type="function">
    <text evidence="1">Involved in the synthesis of meso-diaminopimelate (m-DAP or DL-DAP), required for both lysine and peptidoglycan biosynthesis. Catalyzes the direct conversion of tetrahydrodipicolinate to LL-diaminopimelate.</text>
</comment>
<comment type="catalytic activity">
    <reaction evidence="1">
        <text>(2S,6S)-2,6-diaminopimelate + 2-oxoglutarate = (S)-2,3,4,5-tetrahydrodipicolinate + L-glutamate + H2O + H(+)</text>
        <dbReference type="Rhea" id="RHEA:23988"/>
        <dbReference type="ChEBI" id="CHEBI:15377"/>
        <dbReference type="ChEBI" id="CHEBI:15378"/>
        <dbReference type="ChEBI" id="CHEBI:16810"/>
        <dbReference type="ChEBI" id="CHEBI:16845"/>
        <dbReference type="ChEBI" id="CHEBI:29985"/>
        <dbReference type="ChEBI" id="CHEBI:57609"/>
        <dbReference type="EC" id="2.6.1.83"/>
    </reaction>
</comment>
<comment type="cofactor">
    <cofactor evidence="1">
        <name>pyridoxal 5'-phosphate</name>
        <dbReference type="ChEBI" id="CHEBI:597326"/>
    </cofactor>
</comment>
<comment type="pathway">
    <text evidence="1">Amino-acid biosynthesis; L-lysine biosynthesis via DAP pathway; LL-2,6-diaminopimelate from (S)-tetrahydrodipicolinate (aminotransferase route): step 1/1.</text>
</comment>
<comment type="subunit">
    <text evidence="1">Homodimer.</text>
</comment>
<comment type="similarity">
    <text evidence="1">Belongs to the class-I pyridoxal-phosphate-dependent aminotransferase family. LL-diaminopimelate aminotransferase subfamily.</text>
</comment>
<sequence length="408" mass="44477">MALVNGNYLKLKAGYLFPEIGRRVKAFSEANPDAALIRLGIGDVTEPLPQACRDAMKNAIDEMGTREGFHGYGPEQGYAWLREAIAKHDFQSRGCDISAEEIFVSDGSKCDSSNILDILGEGNRIAVTDPVYPVYVDSNVMAGRTGDANEGGQYGGLSYLPITAANDFTAPLPSTPVDLIYLCFPNNPTGAVASREQLKSWVDYALEHKALILFDAAYEAFIQDPAIPHSIFEIEGARQCAIEFRSFSKNAGFTGTRCALTVVPKGLMGTSATGEQVELWGLWNRRQSTKFNGVSYIVQRGAEAVYSEQGQAEVKALINFYMENAAIIRRELSAAGLTIYGGEHAPYVWIKTPEGMDSWGFFDHLLNRANVVGTPGSGFGAAGEGYFRLSAFNSRSNVDEAMRRIRAL</sequence>
<dbReference type="EC" id="2.6.1.83" evidence="1"/>
<dbReference type="EMBL" id="CT978603">
    <property type="protein sequence ID" value="CAK29082.1"/>
    <property type="molecule type" value="Genomic_DNA"/>
</dbReference>
<dbReference type="SMR" id="A5GW23"/>
<dbReference type="STRING" id="316278.SynRCC307_2179"/>
<dbReference type="KEGG" id="syr:SynRCC307_2179"/>
<dbReference type="eggNOG" id="COG0436">
    <property type="taxonomic scope" value="Bacteria"/>
</dbReference>
<dbReference type="HOGENOM" id="CLU_051433_0_0_3"/>
<dbReference type="OrthoDB" id="9802328at2"/>
<dbReference type="UniPathway" id="UPA00034">
    <property type="reaction ID" value="UER00466"/>
</dbReference>
<dbReference type="Proteomes" id="UP000001115">
    <property type="component" value="Chromosome"/>
</dbReference>
<dbReference type="GO" id="GO:0010285">
    <property type="term" value="F:L,L-diaminopimelate aminotransferase activity"/>
    <property type="evidence" value="ECO:0007669"/>
    <property type="project" value="UniProtKB-UniRule"/>
</dbReference>
<dbReference type="GO" id="GO:0030170">
    <property type="term" value="F:pyridoxal phosphate binding"/>
    <property type="evidence" value="ECO:0007669"/>
    <property type="project" value="UniProtKB-UniRule"/>
</dbReference>
<dbReference type="GO" id="GO:0033362">
    <property type="term" value="P:lysine biosynthetic process via diaminopimelate, diaminopimelate-aminotransferase pathway"/>
    <property type="evidence" value="ECO:0007669"/>
    <property type="project" value="UniProtKB-UniRule"/>
</dbReference>
<dbReference type="CDD" id="cd00609">
    <property type="entry name" value="AAT_like"/>
    <property type="match status" value="1"/>
</dbReference>
<dbReference type="FunFam" id="3.40.640.10:FF:000099">
    <property type="entry name" value="LL-diaminopimelate aminotransferase, chloroplastic"/>
    <property type="match status" value="1"/>
</dbReference>
<dbReference type="Gene3D" id="3.90.1150.10">
    <property type="entry name" value="Aspartate Aminotransferase, domain 1"/>
    <property type="match status" value="1"/>
</dbReference>
<dbReference type="Gene3D" id="3.40.640.10">
    <property type="entry name" value="Type I PLP-dependent aspartate aminotransferase-like (Major domain)"/>
    <property type="match status" value="1"/>
</dbReference>
<dbReference type="HAMAP" id="MF_01642">
    <property type="entry name" value="DapL_aminotrans_1"/>
    <property type="match status" value="1"/>
</dbReference>
<dbReference type="InterPro" id="IPR004839">
    <property type="entry name" value="Aminotransferase_I/II_large"/>
</dbReference>
<dbReference type="InterPro" id="IPR019942">
    <property type="entry name" value="DapL/ALD1"/>
</dbReference>
<dbReference type="InterPro" id="IPR015424">
    <property type="entry name" value="PyrdxlP-dep_Trfase"/>
</dbReference>
<dbReference type="InterPro" id="IPR015421">
    <property type="entry name" value="PyrdxlP-dep_Trfase_major"/>
</dbReference>
<dbReference type="InterPro" id="IPR015422">
    <property type="entry name" value="PyrdxlP-dep_Trfase_small"/>
</dbReference>
<dbReference type="NCBIfam" id="TIGR03542">
    <property type="entry name" value="DAPAT_plant"/>
    <property type="match status" value="1"/>
</dbReference>
<dbReference type="PANTHER" id="PTHR43144">
    <property type="entry name" value="AMINOTRANSFERASE"/>
    <property type="match status" value="1"/>
</dbReference>
<dbReference type="Pfam" id="PF00155">
    <property type="entry name" value="Aminotran_1_2"/>
    <property type="match status" value="1"/>
</dbReference>
<dbReference type="SUPFAM" id="SSF53383">
    <property type="entry name" value="PLP-dependent transferases"/>
    <property type="match status" value="1"/>
</dbReference>
<proteinExistence type="inferred from homology"/>
<accession>A5GW23</accession>
<gene>
    <name evidence="1" type="primary">dapL</name>
    <name type="ordered locus">SynRCC307_2179</name>
</gene>
<keyword id="KW-0032">Aminotransferase</keyword>
<keyword id="KW-0663">Pyridoxal phosphate</keyword>
<keyword id="KW-1185">Reference proteome</keyword>
<keyword id="KW-0808">Transferase</keyword>
<feature type="chain" id="PRO_0000312551" description="LL-diaminopimelate aminotransferase">
    <location>
        <begin position="1"/>
        <end position="408"/>
    </location>
</feature>
<feature type="binding site" evidence="1">
    <location>
        <position position="15"/>
    </location>
    <ligand>
        <name>substrate</name>
    </ligand>
</feature>
<feature type="binding site" evidence="1">
    <location>
        <position position="42"/>
    </location>
    <ligand>
        <name>substrate</name>
    </ligand>
</feature>
<feature type="binding site" evidence="1">
    <location>
        <position position="72"/>
    </location>
    <ligand>
        <name>pyridoxal 5'-phosphate</name>
        <dbReference type="ChEBI" id="CHEBI:597326"/>
    </ligand>
</feature>
<feature type="binding site" evidence="1">
    <location>
        <begin position="108"/>
        <end position="109"/>
    </location>
    <ligand>
        <name>pyridoxal 5'-phosphate</name>
        <dbReference type="ChEBI" id="CHEBI:597326"/>
    </ligand>
</feature>
<feature type="binding site" evidence="1">
    <location>
        <position position="109"/>
    </location>
    <ligand>
        <name>substrate</name>
    </ligand>
</feature>
<feature type="binding site" evidence="1">
    <location>
        <position position="132"/>
    </location>
    <ligand>
        <name>pyridoxal 5'-phosphate</name>
        <dbReference type="ChEBI" id="CHEBI:597326"/>
    </ligand>
</feature>
<feature type="binding site" evidence="1">
    <location>
        <position position="132"/>
    </location>
    <ligand>
        <name>substrate</name>
    </ligand>
</feature>
<feature type="binding site" evidence="1">
    <location>
        <position position="187"/>
    </location>
    <ligand>
        <name>pyridoxal 5'-phosphate</name>
        <dbReference type="ChEBI" id="CHEBI:597326"/>
    </ligand>
</feature>
<feature type="binding site" evidence="1">
    <location>
        <position position="187"/>
    </location>
    <ligand>
        <name>substrate</name>
    </ligand>
</feature>
<feature type="binding site" evidence="1">
    <location>
        <position position="218"/>
    </location>
    <ligand>
        <name>pyridoxal 5'-phosphate</name>
        <dbReference type="ChEBI" id="CHEBI:597326"/>
    </ligand>
</feature>
<feature type="binding site" evidence="1">
    <location>
        <begin position="246"/>
        <end position="248"/>
    </location>
    <ligand>
        <name>pyridoxal 5'-phosphate</name>
        <dbReference type="ChEBI" id="CHEBI:597326"/>
    </ligand>
</feature>
<feature type="binding site" evidence="1">
    <location>
        <position position="257"/>
    </location>
    <ligand>
        <name>pyridoxal 5'-phosphate</name>
        <dbReference type="ChEBI" id="CHEBI:597326"/>
    </ligand>
</feature>
<feature type="binding site" evidence="1">
    <location>
        <position position="292"/>
    </location>
    <ligand>
        <name>pyridoxal 5'-phosphate</name>
        <dbReference type="ChEBI" id="CHEBI:597326"/>
    </ligand>
</feature>
<feature type="binding site" evidence="1">
    <location>
        <position position="292"/>
    </location>
    <ligand>
        <name>substrate</name>
    </ligand>
</feature>
<feature type="binding site" evidence="1">
    <location>
        <position position="388"/>
    </location>
    <ligand>
        <name>substrate</name>
    </ligand>
</feature>
<feature type="modified residue" description="N6-(pyridoxal phosphate)lysine" evidence="1">
    <location>
        <position position="249"/>
    </location>
</feature>
<name>DAPAT_SYNR3</name>